<proteinExistence type="inferred from homology"/>
<reference key="1">
    <citation type="journal article" date="2003" name="Nat. Genet.">
        <title>Comparative analysis of the genome sequences of Bordetella pertussis, Bordetella parapertussis and Bordetella bronchiseptica.</title>
        <authorList>
            <person name="Parkhill J."/>
            <person name="Sebaihia M."/>
            <person name="Preston A."/>
            <person name="Murphy L.D."/>
            <person name="Thomson N.R."/>
            <person name="Harris D.E."/>
            <person name="Holden M.T.G."/>
            <person name="Churcher C.M."/>
            <person name="Bentley S.D."/>
            <person name="Mungall K.L."/>
            <person name="Cerdeno-Tarraga A.-M."/>
            <person name="Temple L."/>
            <person name="James K.D."/>
            <person name="Harris B."/>
            <person name="Quail M.A."/>
            <person name="Achtman M."/>
            <person name="Atkin R."/>
            <person name="Baker S."/>
            <person name="Basham D."/>
            <person name="Bason N."/>
            <person name="Cherevach I."/>
            <person name="Chillingworth T."/>
            <person name="Collins M."/>
            <person name="Cronin A."/>
            <person name="Davis P."/>
            <person name="Doggett J."/>
            <person name="Feltwell T."/>
            <person name="Goble A."/>
            <person name="Hamlin N."/>
            <person name="Hauser H."/>
            <person name="Holroyd S."/>
            <person name="Jagels K."/>
            <person name="Leather S."/>
            <person name="Moule S."/>
            <person name="Norberczak H."/>
            <person name="O'Neil S."/>
            <person name="Ormond D."/>
            <person name="Price C."/>
            <person name="Rabbinowitsch E."/>
            <person name="Rutter S."/>
            <person name="Sanders M."/>
            <person name="Saunders D."/>
            <person name="Seeger K."/>
            <person name="Sharp S."/>
            <person name="Simmonds M."/>
            <person name="Skelton J."/>
            <person name="Squares R."/>
            <person name="Squares S."/>
            <person name="Stevens K."/>
            <person name="Unwin L."/>
            <person name="Whitehead S."/>
            <person name="Barrell B.G."/>
            <person name="Maskell D.J."/>
        </authorList>
    </citation>
    <scope>NUCLEOTIDE SEQUENCE [LARGE SCALE GENOMIC DNA]</scope>
    <source>
        <strain>ATCC BAA-588 / NCTC 13252 / RB50</strain>
    </source>
</reference>
<protein>
    <recommendedName>
        <fullName evidence="1">Small ribosomal subunit protein bS20</fullName>
    </recommendedName>
    <alternativeName>
        <fullName evidence="3">30S ribosomal protein S20</fullName>
    </alternativeName>
</protein>
<gene>
    <name evidence="1" type="primary">rpsT</name>
    <name type="ordered locus">BB2001</name>
</gene>
<evidence type="ECO:0000255" key="1">
    <source>
        <dbReference type="HAMAP-Rule" id="MF_00500"/>
    </source>
</evidence>
<evidence type="ECO:0000256" key="2">
    <source>
        <dbReference type="SAM" id="MobiDB-lite"/>
    </source>
</evidence>
<evidence type="ECO:0000305" key="3"/>
<feature type="chain" id="PRO_0000167926" description="Small ribosomal subunit protein bS20">
    <location>
        <begin position="1"/>
        <end position="87"/>
    </location>
</feature>
<feature type="region of interest" description="Disordered" evidence="2">
    <location>
        <begin position="1"/>
        <end position="25"/>
    </location>
</feature>
<feature type="compositionally biased region" description="Basic residues" evidence="2">
    <location>
        <begin position="7"/>
        <end position="22"/>
    </location>
</feature>
<dbReference type="EMBL" id="BX640443">
    <property type="protein sequence ID" value="CAE32498.1"/>
    <property type="molecule type" value="Genomic_DNA"/>
</dbReference>
<dbReference type="RefSeq" id="WP_003812908.1">
    <property type="nucleotide sequence ID" value="NC_002927.3"/>
</dbReference>
<dbReference type="SMR" id="Q7WKV2"/>
<dbReference type="GeneID" id="93204343"/>
<dbReference type="KEGG" id="bbr:BB2001"/>
<dbReference type="eggNOG" id="COG0268">
    <property type="taxonomic scope" value="Bacteria"/>
</dbReference>
<dbReference type="HOGENOM" id="CLU_160655_4_0_4"/>
<dbReference type="Proteomes" id="UP000001027">
    <property type="component" value="Chromosome"/>
</dbReference>
<dbReference type="GO" id="GO:0005829">
    <property type="term" value="C:cytosol"/>
    <property type="evidence" value="ECO:0007669"/>
    <property type="project" value="TreeGrafter"/>
</dbReference>
<dbReference type="GO" id="GO:0015935">
    <property type="term" value="C:small ribosomal subunit"/>
    <property type="evidence" value="ECO:0007669"/>
    <property type="project" value="TreeGrafter"/>
</dbReference>
<dbReference type="GO" id="GO:0070181">
    <property type="term" value="F:small ribosomal subunit rRNA binding"/>
    <property type="evidence" value="ECO:0007669"/>
    <property type="project" value="TreeGrafter"/>
</dbReference>
<dbReference type="GO" id="GO:0003735">
    <property type="term" value="F:structural constituent of ribosome"/>
    <property type="evidence" value="ECO:0007669"/>
    <property type="project" value="InterPro"/>
</dbReference>
<dbReference type="GO" id="GO:0006412">
    <property type="term" value="P:translation"/>
    <property type="evidence" value="ECO:0007669"/>
    <property type="project" value="UniProtKB-UniRule"/>
</dbReference>
<dbReference type="FunFam" id="1.20.58.110:FF:000001">
    <property type="entry name" value="30S ribosomal protein S20"/>
    <property type="match status" value="1"/>
</dbReference>
<dbReference type="Gene3D" id="1.20.58.110">
    <property type="entry name" value="Ribosomal protein S20"/>
    <property type="match status" value="1"/>
</dbReference>
<dbReference type="HAMAP" id="MF_00500">
    <property type="entry name" value="Ribosomal_bS20"/>
    <property type="match status" value="1"/>
</dbReference>
<dbReference type="InterPro" id="IPR002583">
    <property type="entry name" value="Ribosomal_bS20"/>
</dbReference>
<dbReference type="InterPro" id="IPR036510">
    <property type="entry name" value="Ribosomal_bS20_sf"/>
</dbReference>
<dbReference type="NCBIfam" id="TIGR00029">
    <property type="entry name" value="S20"/>
    <property type="match status" value="1"/>
</dbReference>
<dbReference type="PANTHER" id="PTHR33398">
    <property type="entry name" value="30S RIBOSOMAL PROTEIN S20"/>
    <property type="match status" value="1"/>
</dbReference>
<dbReference type="PANTHER" id="PTHR33398:SF1">
    <property type="entry name" value="SMALL RIBOSOMAL SUBUNIT PROTEIN BS20C"/>
    <property type="match status" value="1"/>
</dbReference>
<dbReference type="Pfam" id="PF01649">
    <property type="entry name" value="Ribosomal_S20p"/>
    <property type="match status" value="1"/>
</dbReference>
<dbReference type="SUPFAM" id="SSF46992">
    <property type="entry name" value="Ribosomal protein S20"/>
    <property type="match status" value="1"/>
</dbReference>
<sequence length="87" mass="9472">MANTAQARKRARQSVQRNKHNSSLRSMLRTAIKRVRQSIATGDKAAAGETLRKATSVIDSVADKNIIHKNKAARHKSRLAAAVKALA</sequence>
<accession>Q7WKV2</accession>
<name>RS20_BORBR</name>
<keyword id="KW-0687">Ribonucleoprotein</keyword>
<keyword id="KW-0689">Ribosomal protein</keyword>
<keyword id="KW-0694">RNA-binding</keyword>
<keyword id="KW-0699">rRNA-binding</keyword>
<comment type="function">
    <text evidence="1">Binds directly to 16S ribosomal RNA.</text>
</comment>
<comment type="similarity">
    <text evidence="1">Belongs to the bacterial ribosomal protein bS20 family.</text>
</comment>
<organism>
    <name type="scientific">Bordetella bronchiseptica (strain ATCC BAA-588 / NCTC 13252 / RB50)</name>
    <name type="common">Alcaligenes bronchisepticus</name>
    <dbReference type="NCBI Taxonomy" id="257310"/>
    <lineage>
        <taxon>Bacteria</taxon>
        <taxon>Pseudomonadati</taxon>
        <taxon>Pseudomonadota</taxon>
        <taxon>Betaproteobacteria</taxon>
        <taxon>Burkholderiales</taxon>
        <taxon>Alcaligenaceae</taxon>
        <taxon>Bordetella</taxon>
    </lineage>
</organism>